<organism>
    <name type="scientific">Frankia alni (strain DSM 45986 / CECT 9034 / ACN14a)</name>
    <dbReference type="NCBI Taxonomy" id="326424"/>
    <lineage>
        <taxon>Bacteria</taxon>
        <taxon>Bacillati</taxon>
        <taxon>Actinomycetota</taxon>
        <taxon>Actinomycetes</taxon>
        <taxon>Frankiales</taxon>
        <taxon>Frankiaceae</taxon>
        <taxon>Frankia</taxon>
    </lineage>
</organism>
<gene>
    <name evidence="1" type="primary">rpsE</name>
    <name type="ordered locus">FRAAL1098</name>
</gene>
<proteinExistence type="inferred from homology"/>
<keyword id="KW-1185">Reference proteome</keyword>
<keyword id="KW-0687">Ribonucleoprotein</keyword>
<keyword id="KW-0689">Ribosomal protein</keyword>
<keyword id="KW-0694">RNA-binding</keyword>
<keyword id="KW-0699">rRNA-binding</keyword>
<protein>
    <recommendedName>
        <fullName evidence="1">Small ribosomal subunit protein uS5</fullName>
    </recommendedName>
    <alternativeName>
        <fullName evidence="3">30S ribosomal protein S5</fullName>
    </alternativeName>
</protein>
<dbReference type="EMBL" id="CT573213">
    <property type="protein sequence ID" value="CAJ59763.1"/>
    <property type="molecule type" value="Genomic_DNA"/>
</dbReference>
<dbReference type="RefSeq" id="WP_009740511.1">
    <property type="nucleotide sequence ID" value="NC_008278.1"/>
</dbReference>
<dbReference type="SMR" id="Q0RRQ4"/>
<dbReference type="STRING" id="326424.FRAAL1098"/>
<dbReference type="KEGG" id="fal:FRAAL1098"/>
<dbReference type="eggNOG" id="COG0098">
    <property type="taxonomic scope" value="Bacteria"/>
</dbReference>
<dbReference type="HOGENOM" id="CLU_065898_2_2_11"/>
<dbReference type="OrthoDB" id="9809045at2"/>
<dbReference type="Proteomes" id="UP000000657">
    <property type="component" value="Chromosome"/>
</dbReference>
<dbReference type="GO" id="GO:0015935">
    <property type="term" value="C:small ribosomal subunit"/>
    <property type="evidence" value="ECO:0007669"/>
    <property type="project" value="InterPro"/>
</dbReference>
<dbReference type="GO" id="GO:0019843">
    <property type="term" value="F:rRNA binding"/>
    <property type="evidence" value="ECO:0007669"/>
    <property type="project" value="UniProtKB-UniRule"/>
</dbReference>
<dbReference type="GO" id="GO:0003735">
    <property type="term" value="F:structural constituent of ribosome"/>
    <property type="evidence" value="ECO:0007669"/>
    <property type="project" value="InterPro"/>
</dbReference>
<dbReference type="GO" id="GO:0006412">
    <property type="term" value="P:translation"/>
    <property type="evidence" value="ECO:0007669"/>
    <property type="project" value="UniProtKB-UniRule"/>
</dbReference>
<dbReference type="FunFam" id="3.30.160.20:FF:000001">
    <property type="entry name" value="30S ribosomal protein S5"/>
    <property type="match status" value="1"/>
</dbReference>
<dbReference type="FunFam" id="3.30.230.10:FF:000002">
    <property type="entry name" value="30S ribosomal protein S5"/>
    <property type="match status" value="1"/>
</dbReference>
<dbReference type="Gene3D" id="3.30.160.20">
    <property type="match status" value="1"/>
</dbReference>
<dbReference type="Gene3D" id="3.30.230.10">
    <property type="match status" value="1"/>
</dbReference>
<dbReference type="HAMAP" id="MF_01307_B">
    <property type="entry name" value="Ribosomal_uS5_B"/>
    <property type="match status" value="1"/>
</dbReference>
<dbReference type="InterPro" id="IPR020568">
    <property type="entry name" value="Ribosomal_Su5_D2-typ_SF"/>
</dbReference>
<dbReference type="InterPro" id="IPR000851">
    <property type="entry name" value="Ribosomal_uS5"/>
</dbReference>
<dbReference type="InterPro" id="IPR005712">
    <property type="entry name" value="Ribosomal_uS5_bac-type"/>
</dbReference>
<dbReference type="InterPro" id="IPR005324">
    <property type="entry name" value="Ribosomal_uS5_C"/>
</dbReference>
<dbReference type="InterPro" id="IPR013810">
    <property type="entry name" value="Ribosomal_uS5_N"/>
</dbReference>
<dbReference type="InterPro" id="IPR018192">
    <property type="entry name" value="Ribosomal_uS5_N_CS"/>
</dbReference>
<dbReference type="InterPro" id="IPR014721">
    <property type="entry name" value="Ribsml_uS5_D2-typ_fold_subgr"/>
</dbReference>
<dbReference type="NCBIfam" id="TIGR01021">
    <property type="entry name" value="rpsE_bact"/>
    <property type="match status" value="1"/>
</dbReference>
<dbReference type="PANTHER" id="PTHR48277">
    <property type="entry name" value="MITOCHONDRIAL RIBOSOMAL PROTEIN S5"/>
    <property type="match status" value="1"/>
</dbReference>
<dbReference type="PANTHER" id="PTHR48277:SF1">
    <property type="entry name" value="MITOCHONDRIAL RIBOSOMAL PROTEIN S5"/>
    <property type="match status" value="1"/>
</dbReference>
<dbReference type="Pfam" id="PF00333">
    <property type="entry name" value="Ribosomal_S5"/>
    <property type="match status" value="1"/>
</dbReference>
<dbReference type="Pfam" id="PF03719">
    <property type="entry name" value="Ribosomal_S5_C"/>
    <property type="match status" value="1"/>
</dbReference>
<dbReference type="SUPFAM" id="SSF54768">
    <property type="entry name" value="dsRNA-binding domain-like"/>
    <property type="match status" value="1"/>
</dbReference>
<dbReference type="SUPFAM" id="SSF54211">
    <property type="entry name" value="Ribosomal protein S5 domain 2-like"/>
    <property type="match status" value="1"/>
</dbReference>
<dbReference type="PROSITE" id="PS00585">
    <property type="entry name" value="RIBOSOMAL_S5"/>
    <property type="match status" value="1"/>
</dbReference>
<dbReference type="PROSITE" id="PS50881">
    <property type="entry name" value="S5_DSRBD"/>
    <property type="match status" value="1"/>
</dbReference>
<comment type="function">
    <text evidence="1">With S4 and S12 plays an important role in translational accuracy.</text>
</comment>
<comment type="function">
    <text evidence="1">Located at the back of the 30S subunit body where it stabilizes the conformation of the head with respect to the body.</text>
</comment>
<comment type="subunit">
    <text evidence="1">Part of the 30S ribosomal subunit. Contacts proteins S4 and S8.</text>
</comment>
<comment type="domain">
    <text>The N-terminal domain interacts with the head of the 30S subunit; the C-terminal domain interacts with the body and contacts protein S4. The interaction surface between S4 and S5 is involved in control of translational fidelity.</text>
</comment>
<comment type="similarity">
    <text evidence="1">Belongs to the universal ribosomal protein uS5 family.</text>
</comment>
<evidence type="ECO:0000255" key="1">
    <source>
        <dbReference type="HAMAP-Rule" id="MF_01307"/>
    </source>
</evidence>
<evidence type="ECO:0000256" key="2">
    <source>
        <dbReference type="SAM" id="MobiDB-lite"/>
    </source>
</evidence>
<evidence type="ECO:0000305" key="3"/>
<feature type="chain" id="PRO_1000086011" description="Small ribosomal subunit protein uS5">
    <location>
        <begin position="1"/>
        <end position="202"/>
    </location>
</feature>
<feature type="domain" description="S5 DRBM" evidence="1">
    <location>
        <begin position="34"/>
        <end position="97"/>
    </location>
</feature>
<feature type="region of interest" description="Disordered" evidence="2">
    <location>
        <begin position="1"/>
        <end position="31"/>
    </location>
</feature>
<feature type="compositionally biased region" description="Gly residues" evidence="2">
    <location>
        <begin position="1"/>
        <end position="13"/>
    </location>
</feature>
<feature type="compositionally biased region" description="Basic and acidic residues" evidence="2">
    <location>
        <begin position="14"/>
        <end position="23"/>
    </location>
</feature>
<reference key="1">
    <citation type="journal article" date="2007" name="Genome Res.">
        <title>Genome characteristics of facultatively symbiotic Frankia sp. strains reflect host range and host plant biogeography.</title>
        <authorList>
            <person name="Normand P."/>
            <person name="Lapierre P."/>
            <person name="Tisa L.S."/>
            <person name="Gogarten J.P."/>
            <person name="Alloisio N."/>
            <person name="Bagnarol E."/>
            <person name="Bassi C.A."/>
            <person name="Berry A.M."/>
            <person name="Bickhart D.M."/>
            <person name="Choisne N."/>
            <person name="Couloux A."/>
            <person name="Cournoyer B."/>
            <person name="Cruveiller S."/>
            <person name="Daubin V."/>
            <person name="Demange N."/>
            <person name="Francino M.P."/>
            <person name="Goltsman E."/>
            <person name="Huang Y."/>
            <person name="Kopp O.R."/>
            <person name="Labarre L."/>
            <person name="Lapidus A."/>
            <person name="Lavire C."/>
            <person name="Marechal J."/>
            <person name="Martinez M."/>
            <person name="Mastronunzio J.E."/>
            <person name="Mullin B.C."/>
            <person name="Niemann J."/>
            <person name="Pujic P."/>
            <person name="Rawnsley T."/>
            <person name="Rouy Z."/>
            <person name="Schenowitz C."/>
            <person name="Sellstedt A."/>
            <person name="Tavares F."/>
            <person name="Tomkins J.P."/>
            <person name="Vallenet D."/>
            <person name="Valverde C."/>
            <person name="Wall L.G."/>
            <person name="Wang Y."/>
            <person name="Medigue C."/>
            <person name="Benson D.R."/>
        </authorList>
    </citation>
    <scope>NUCLEOTIDE SEQUENCE [LARGE SCALE GENOMIC DNA]</scope>
    <source>
        <strain>DSM 45986 / CECT 9034 / ACN14a</strain>
    </source>
</reference>
<accession>Q0RRQ4</accession>
<name>RS5_FRAAA</name>
<sequence>MPGQQRRGGGSGGSDRRERRDRSGGGPAQEKNAYVERVVAINRVAKVVKGGRRFSFTALVVVGDADGTVGVGYGKAKEVPAAIAKGVEEAKKHFFKVPRIGSTIPHPVQGEEAAGVVLLKPASPGTGVIAGGPVRAVLECAGVHDVLSKSLGSSNPINIVHATVAALRGLMRPEEIAARRGLPLEDVAPPAMLRARAAGAGV</sequence>